<comment type="function">
    <text evidence="1">Catalyzes the phosphorolysis of diverse nucleosides, yielding D-ribose 1-phosphate and the respective free bases. Can use uridine, adenosine, guanosine, cytidine, thymidine, inosine and xanthosine as substrates. Also catalyzes the reverse reactions.</text>
</comment>
<comment type="catalytic activity">
    <reaction evidence="1">
        <text>a purine D-ribonucleoside + phosphate = a purine nucleobase + alpha-D-ribose 1-phosphate</text>
        <dbReference type="Rhea" id="RHEA:19805"/>
        <dbReference type="ChEBI" id="CHEBI:26386"/>
        <dbReference type="ChEBI" id="CHEBI:43474"/>
        <dbReference type="ChEBI" id="CHEBI:57720"/>
        <dbReference type="ChEBI" id="CHEBI:142355"/>
        <dbReference type="EC" id="2.4.2.1"/>
    </reaction>
</comment>
<comment type="catalytic activity">
    <reaction evidence="1">
        <text>adenosine + phosphate = alpha-D-ribose 1-phosphate + adenine</text>
        <dbReference type="Rhea" id="RHEA:27642"/>
        <dbReference type="ChEBI" id="CHEBI:16335"/>
        <dbReference type="ChEBI" id="CHEBI:16708"/>
        <dbReference type="ChEBI" id="CHEBI:43474"/>
        <dbReference type="ChEBI" id="CHEBI:57720"/>
        <dbReference type="EC" id="2.4.2.1"/>
    </reaction>
</comment>
<comment type="catalytic activity">
    <reaction evidence="1">
        <text>cytidine + phosphate = cytosine + alpha-D-ribose 1-phosphate</text>
        <dbReference type="Rhea" id="RHEA:52540"/>
        <dbReference type="ChEBI" id="CHEBI:16040"/>
        <dbReference type="ChEBI" id="CHEBI:17562"/>
        <dbReference type="ChEBI" id="CHEBI:43474"/>
        <dbReference type="ChEBI" id="CHEBI:57720"/>
        <dbReference type="EC" id="2.4.2.2"/>
    </reaction>
</comment>
<comment type="catalytic activity">
    <reaction evidence="1">
        <text>guanosine + phosphate = alpha-D-ribose 1-phosphate + guanine</text>
        <dbReference type="Rhea" id="RHEA:13233"/>
        <dbReference type="ChEBI" id="CHEBI:16235"/>
        <dbReference type="ChEBI" id="CHEBI:16750"/>
        <dbReference type="ChEBI" id="CHEBI:43474"/>
        <dbReference type="ChEBI" id="CHEBI:57720"/>
        <dbReference type="EC" id="2.4.2.1"/>
    </reaction>
</comment>
<comment type="catalytic activity">
    <reaction evidence="1">
        <text>inosine + phosphate = alpha-D-ribose 1-phosphate + hypoxanthine</text>
        <dbReference type="Rhea" id="RHEA:27646"/>
        <dbReference type="ChEBI" id="CHEBI:17368"/>
        <dbReference type="ChEBI" id="CHEBI:17596"/>
        <dbReference type="ChEBI" id="CHEBI:43474"/>
        <dbReference type="ChEBI" id="CHEBI:57720"/>
        <dbReference type="EC" id="2.4.2.1"/>
    </reaction>
</comment>
<comment type="catalytic activity">
    <reaction evidence="1">
        <text>thymidine + phosphate = 2-deoxy-alpha-D-ribose 1-phosphate + thymine</text>
        <dbReference type="Rhea" id="RHEA:16037"/>
        <dbReference type="ChEBI" id="CHEBI:17748"/>
        <dbReference type="ChEBI" id="CHEBI:17821"/>
        <dbReference type="ChEBI" id="CHEBI:43474"/>
        <dbReference type="ChEBI" id="CHEBI:57259"/>
        <dbReference type="EC" id="2.4.2.2"/>
    </reaction>
</comment>
<comment type="catalytic activity">
    <reaction evidence="1">
        <text>uridine + phosphate = alpha-D-ribose 1-phosphate + uracil</text>
        <dbReference type="Rhea" id="RHEA:24388"/>
        <dbReference type="ChEBI" id="CHEBI:16704"/>
        <dbReference type="ChEBI" id="CHEBI:17568"/>
        <dbReference type="ChEBI" id="CHEBI:43474"/>
        <dbReference type="ChEBI" id="CHEBI:57720"/>
        <dbReference type="EC" id="2.4.2.2"/>
    </reaction>
</comment>
<comment type="catalytic activity">
    <reaction evidence="1">
        <text>xanthosine + phosphate = alpha-D-ribose 1-phosphate + xanthine</text>
        <dbReference type="Rhea" id="RHEA:27638"/>
        <dbReference type="ChEBI" id="CHEBI:17712"/>
        <dbReference type="ChEBI" id="CHEBI:18107"/>
        <dbReference type="ChEBI" id="CHEBI:43474"/>
        <dbReference type="ChEBI" id="CHEBI:57720"/>
        <dbReference type="EC" id="2.4.2.1"/>
    </reaction>
</comment>
<comment type="similarity">
    <text evidence="1">Belongs to the nucleoside phosphorylase PpnP family.</text>
</comment>
<gene>
    <name evidence="1" type="primary">ppnP</name>
    <name type="ordered locus">Gmet_1778</name>
</gene>
<organism>
    <name type="scientific">Geobacter metallireducens (strain ATCC 53774 / DSM 7210 / GS-15)</name>
    <dbReference type="NCBI Taxonomy" id="269799"/>
    <lineage>
        <taxon>Bacteria</taxon>
        <taxon>Pseudomonadati</taxon>
        <taxon>Thermodesulfobacteriota</taxon>
        <taxon>Desulfuromonadia</taxon>
        <taxon>Geobacterales</taxon>
        <taxon>Geobacteraceae</taxon>
        <taxon>Geobacter</taxon>
    </lineage>
</organism>
<keyword id="KW-0328">Glycosyltransferase</keyword>
<keyword id="KW-1185">Reference proteome</keyword>
<keyword id="KW-0808">Transferase</keyword>
<accession>Q39UR5</accession>
<sequence>MSEFINVTVVREANVFFNGGVVSRTVIFPDGTKKTLGIMQPGEYTFNTGAPEIMEILTGELDLKLPGSDLWDRIGGGESFEVPANSSFTMKVLSLTDYCCSFLG</sequence>
<evidence type="ECO:0000255" key="1">
    <source>
        <dbReference type="HAMAP-Rule" id="MF_01537"/>
    </source>
</evidence>
<name>PPNP_GEOMG</name>
<dbReference type="EC" id="2.4.2.1" evidence="1"/>
<dbReference type="EC" id="2.4.2.2" evidence="1"/>
<dbReference type="EMBL" id="CP000148">
    <property type="protein sequence ID" value="ABB32009.1"/>
    <property type="molecule type" value="Genomic_DNA"/>
</dbReference>
<dbReference type="RefSeq" id="WP_004513325.1">
    <property type="nucleotide sequence ID" value="NC_007517.1"/>
</dbReference>
<dbReference type="SMR" id="Q39UR5"/>
<dbReference type="STRING" id="269799.Gmet_1778"/>
<dbReference type="KEGG" id="gme:Gmet_1778"/>
<dbReference type="eggNOG" id="COG3123">
    <property type="taxonomic scope" value="Bacteria"/>
</dbReference>
<dbReference type="HOGENOM" id="CLU_157874_1_0_7"/>
<dbReference type="Proteomes" id="UP000007073">
    <property type="component" value="Chromosome"/>
</dbReference>
<dbReference type="GO" id="GO:0005829">
    <property type="term" value="C:cytosol"/>
    <property type="evidence" value="ECO:0007669"/>
    <property type="project" value="TreeGrafter"/>
</dbReference>
<dbReference type="GO" id="GO:0047975">
    <property type="term" value="F:guanosine phosphorylase activity"/>
    <property type="evidence" value="ECO:0007669"/>
    <property type="project" value="UniProtKB-EC"/>
</dbReference>
<dbReference type="GO" id="GO:0004731">
    <property type="term" value="F:purine-nucleoside phosphorylase activity"/>
    <property type="evidence" value="ECO:0007669"/>
    <property type="project" value="UniProtKB-UniRule"/>
</dbReference>
<dbReference type="GO" id="GO:0009032">
    <property type="term" value="F:thymidine phosphorylase activity"/>
    <property type="evidence" value="ECO:0007669"/>
    <property type="project" value="UniProtKB-EC"/>
</dbReference>
<dbReference type="GO" id="GO:0004850">
    <property type="term" value="F:uridine phosphorylase activity"/>
    <property type="evidence" value="ECO:0007669"/>
    <property type="project" value="UniProtKB-EC"/>
</dbReference>
<dbReference type="CDD" id="cd20296">
    <property type="entry name" value="cupin_PpnP-like"/>
    <property type="match status" value="1"/>
</dbReference>
<dbReference type="FunFam" id="2.60.120.10:FF:000016">
    <property type="entry name" value="Pyrimidine/purine nucleoside phosphorylase"/>
    <property type="match status" value="1"/>
</dbReference>
<dbReference type="Gene3D" id="2.60.120.10">
    <property type="entry name" value="Jelly Rolls"/>
    <property type="match status" value="1"/>
</dbReference>
<dbReference type="HAMAP" id="MF_01537">
    <property type="entry name" value="Nucleos_phosphorylase_PpnP"/>
    <property type="match status" value="1"/>
</dbReference>
<dbReference type="InterPro" id="IPR009664">
    <property type="entry name" value="Ppnp"/>
</dbReference>
<dbReference type="InterPro" id="IPR014710">
    <property type="entry name" value="RmlC-like_jellyroll"/>
</dbReference>
<dbReference type="InterPro" id="IPR011051">
    <property type="entry name" value="RmlC_Cupin_sf"/>
</dbReference>
<dbReference type="PANTHER" id="PTHR36540">
    <property type="entry name" value="PYRIMIDINE/PURINE NUCLEOSIDE PHOSPHORYLASE"/>
    <property type="match status" value="1"/>
</dbReference>
<dbReference type="PANTHER" id="PTHR36540:SF1">
    <property type="entry name" value="PYRIMIDINE_PURINE NUCLEOSIDE PHOSPHORYLASE"/>
    <property type="match status" value="1"/>
</dbReference>
<dbReference type="Pfam" id="PF06865">
    <property type="entry name" value="Ppnp"/>
    <property type="match status" value="1"/>
</dbReference>
<dbReference type="SUPFAM" id="SSF51182">
    <property type="entry name" value="RmlC-like cupins"/>
    <property type="match status" value="1"/>
</dbReference>
<proteinExistence type="inferred from homology"/>
<protein>
    <recommendedName>
        <fullName evidence="1">Pyrimidine/purine nucleoside phosphorylase</fullName>
        <ecNumber evidence="1">2.4.2.1</ecNumber>
        <ecNumber evidence="1">2.4.2.2</ecNumber>
    </recommendedName>
    <alternativeName>
        <fullName evidence="1">Adenosine phosphorylase</fullName>
    </alternativeName>
    <alternativeName>
        <fullName evidence="1">Cytidine phosphorylase</fullName>
    </alternativeName>
    <alternativeName>
        <fullName evidence="1">Guanosine phosphorylase</fullName>
    </alternativeName>
    <alternativeName>
        <fullName evidence="1">Inosine phosphorylase</fullName>
    </alternativeName>
    <alternativeName>
        <fullName evidence="1">Thymidine phosphorylase</fullName>
    </alternativeName>
    <alternativeName>
        <fullName evidence="1">Uridine phosphorylase</fullName>
    </alternativeName>
    <alternativeName>
        <fullName evidence="1">Xanthosine phosphorylase</fullName>
    </alternativeName>
</protein>
<reference key="1">
    <citation type="journal article" date="2009" name="BMC Microbiol.">
        <title>The genome sequence of Geobacter metallireducens: features of metabolism, physiology and regulation common and dissimilar to Geobacter sulfurreducens.</title>
        <authorList>
            <person name="Aklujkar M."/>
            <person name="Krushkal J."/>
            <person name="DiBartolo G."/>
            <person name="Lapidus A."/>
            <person name="Land M.L."/>
            <person name="Lovley D.R."/>
        </authorList>
    </citation>
    <scope>NUCLEOTIDE SEQUENCE [LARGE SCALE GENOMIC DNA]</scope>
    <source>
        <strain>ATCC 53774 / DSM 7210 / GS-15</strain>
    </source>
</reference>
<feature type="chain" id="PRO_0000298696" description="Pyrimidine/purine nucleoside phosphorylase">
    <location>
        <begin position="1"/>
        <end position="104"/>
    </location>
</feature>